<sequence length="309" mass="35743">MPIRVPDELPAVNFLREENVFVMTTSRASGQEIRPLKVLILNLMPKKIETENQFLRLLSNSPLQVDIQLLRIDSRESRNTPAEHLNNFYCNFEDIQEQNFDGLIVTGAPLGLVEFNDVAYWPQIKQVLEWSKDHVTSTLFVCWAVQAALNILYGIPKQTRTDKLSGVYEHHILHPHALLTRGFDDSFLAPHSRYADFPAALIRDYTDLEILAETEEGDAYLFASKDKRIAFVTGHPEYDAQTLAQEYFRDVEAGLDPDVPYNYFPHNDPQNTPRASWRSHGNLLFTNWLNYYVYQITPYDLRHMNPTLD</sequence>
<name>METAS_ECOUT</name>
<evidence type="ECO:0000255" key="1">
    <source>
        <dbReference type="HAMAP-Rule" id="MF_00295"/>
    </source>
</evidence>
<gene>
    <name evidence="1" type="primary">metAS</name>
    <name type="ordered locus">UTI89_C4572</name>
</gene>
<feature type="chain" id="PRO_1000021813" description="Homoserine O-succinyltransferase">
    <location>
        <begin position="1"/>
        <end position="309"/>
    </location>
</feature>
<feature type="active site" description="Acyl-thioester intermediate" evidence="1">
    <location>
        <position position="142"/>
    </location>
</feature>
<feature type="active site" description="Proton acceptor" evidence="1">
    <location>
        <position position="235"/>
    </location>
</feature>
<feature type="active site" evidence="1">
    <location>
        <position position="237"/>
    </location>
</feature>
<feature type="binding site" evidence="1">
    <location>
        <position position="163"/>
    </location>
    <ligand>
        <name>substrate</name>
    </ligand>
</feature>
<feature type="binding site" evidence="1">
    <location>
        <position position="192"/>
    </location>
    <ligand>
        <name>substrate</name>
    </ligand>
</feature>
<feature type="binding site" evidence="1">
    <location>
        <position position="249"/>
    </location>
    <ligand>
        <name>substrate</name>
    </ligand>
</feature>
<feature type="site" description="Important for acyl-CoA specificity" evidence="1">
    <location>
        <position position="111"/>
    </location>
</feature>
<feature type="site" description="Important for substrate specificity" evidence="1">
    <location>
        <position position="192"/>
    </location>
</feature>
<accession>Q1R3T4</accession>
<dbReference type="EC" id="2.3.1.46" evidence="1"/>
<dbReference type="EMBL" id="CP000243">
    <property type="protein sequence ID" value="ABE09980.1"/>
    <property type="molecule type" value="Genomic_DNA"/>
</dbReference>
<dbReference type="SMR" id="Q1R3T4"/>
<dbReference type="KEGG" id="eci:UTI89_C4572"/>
<dbReference type="HOGENOM" id="CLU_057851_0_1_6"/>
<dbReference type="UniPathway" id="UPA00051">
    <property type="reaction ID" value="UER00075"/>
</dbReference>
<dbReference type="Proteomes" id="UP000001952">
    <property type="component" value="Chromosome"/>
</dbReference>
<dbReference type="GO" id="GO:0005737">
    <property type="term" value="C:cytoplasm"/>
    <property type="evidence" value="ECO:0007669"/>
    <property type="project" value="UniProtKB-SubCell"/>
</dbReference>
<dbReference type="GO" id="GO:0004414">
    <property type="term" value="F:homoserine O-acetyltransferase activity"/>
    <property type="evidence" value="ECO:0007669"/>
    <property type="project" value="UniProtKB-UniRule"/>
</dbReference>
<dbReference type="GO" id="GO:0008899">
    <property type="term" value="F:homoserine O-succinyltransferase activity"/>
    <property type="evidence" value="ECO:0007669"/>
    <property type="project" value="UniProtKB-EC"/>
</dbReference>
<dbReference type="GO" id="GO:0019281">
    <property type="term" value="P:L-methionine biosynthetic process from homoserine via O-succinyl-L-homoserine and cystathionine"/>
    <property type="evidence" value="ECO:0007669"/>
    <property type="project" value="InterPro"/>
</dbReference>
<dbReference type="CDD" id="cd03131">
    <property type="entry name" value="GATase1_HTS"/>
    <property type="match status" value="1"/>
</dbReference>
<dbReference type="FunFam" id="3.40.50.880:FF:000004">
    <property type="entry name" value="Homoserine O-succinyltransferase"/>
    <property type="match status" value="1"/>
</dbReference>
<dbReference type="Gene3D" id="3.40.50.880">
    <property type="match status" value="1"/>
</dbReference>
<dbReference type="HAMAP" id="MF_00295">
    <property type="entry name" value="MetA_acyltransf"/>
    <property type="match status" value="1"/>
</dbReference>
<dbReference type="InterPro" id="IPR029062">
    <property type="entry name" value="Class_I_gatase-like"/>
</dbReference>
<dbReference type="InterPro" id="IPR005697">
    <property type="entry name" value="HST_MetA"/>
</dbReference>
<dbReference type="InterPro" id="IPR033752">
    <property type="entry name" value="MetA_family"/>
</dbReference>
<dbReference type="NCBIfam" id="TIGR01001">
    <property type="entry name" value="metA"/>
    <property type="match status" value="1"/>
</dbReference>
<dbReference type="PANTHER" id="PTHR20919">
    <property type="entry name" value="HOMOSERINE O-SUCCINYLTRANSFERASE"/>
    <property type="match status" value="1"/>
</dbReference>
<dbReference type="PANTHER" id="PTHR20919:SF0">
    <property type="entry name" value="HOMOSERINE O-SUCCINYLTRANSFERASE"/>
    <property type="match status" value="1"/>
</dbReference>
<dbReference type="Pfam" id="PF04204">
    <property type="entry name" value="HTS"/>
    <property type="match status" value="1"/>
</dbReference>
<dbReference type="PIRSF" id="PIRSF000450">
    <property type="entry name" value="H_ser_succinyltr"/>
    <property type="match status" value="1"/>
</dbReference>
<dbReference type="SUPFAM" id="SSF52317">
    <property type="entry name" value="Class I glutamine amidotransferase-like"/>
    <property type="match status" value="1"/>
</dbReference>
<reference key="1">
    <citation type="journal article" date="2006" name="Proc. Natl. Acad. Sci. U.S.A.">
        <title>Identification of genes subject to positive selection in uropathogenic strains of Escherichia coli: a comparative genomics approach.</title>
        <authorList>
            <person name="Chen S.L."/>
            <person name="Hung C.-S."/>
            <person name="Xu J."/>
            <person name="Reigstad C.S."/>
            <person name="Magrini V."/>
            <person name="Sabo A."/>
            <person name="Blasiar D."/>
            <person name="Bieri T."/>
            <person name="Meyer R.R."/>
            <person name="Ozersky P."/>
            <person name="Armstrong J.R."/>
            <person name="Fulton R.S."/>
            <person name="Latreille J.P."/>
            <person name="Spieth J."/>
            <person name="Hooton T.M."/>
            <person name="Mardis E.R."/>
            <person name="Hultgren S.J."/>
            <person name="Gordon J.I."/>
        </authorList>
    </citation>
    <scope>NUCLEOTIDE SEQUENCE [LARGE SCALE GENOMIC DNA]</scope>
    <source>
        <strain>UTI89 / UPEC</strain>
    </source>
</reference>
<protein>
    <recommendedName>
        <fullName evidence="1">Homoserine O-succinyltransferase</fullName>
        <shortName evidence="1">HST</shortName>
        <ecNumber evidence="1">2.3.1.46</ecNumber>
    </recommendedName>
    <alternativeName>
        <fullName evidence="1">Homoserine transsuccinylase</fullName>
        <shortName evidence="1">HTS</shortName>
    </alternativeName>
</protein>
<organism>
    <name type="scientific">Escherichia coli (strain UTI89 / UPEC)</name>
    <dbReference type="NCBI Taxonomy" id="364106"/>
    <lineage>
        <taxon>Bacteria</taxon>
        <taxon>Pseudomonadati</taxon>
        <taxon>Pseudomonadota</taxon>
        <taxon>Gammaproteobacteria</taxon>
        <taxon>Enterobacterales</taxon>
        <taxon>Enterobacteriaceae</taxon>
        <taxon>Escherichia</taxon>
    </lineage>
</organism>
<comment type="function">
    <text evidence="1">Transfers a succinyl group from succinyl-CoA to L-homoserine, forming succinyl-L-homoserine.</text>
</comment>
<comment type="catalytic activity">
    <reaction evidence="1">
        <text>L-homoserine + succinyl-CoA = O-succinyl-L-homoserine + CoA</text>
        <dbReference type="Rhea" id="RHEA:22008"/>
        <dbReference type="ChEBI" id="CHEBI:57287"/>
        <dbReference type="ChEBI" id="CHEBI:57292"/>
        <dbReference type="ChEBI" id="CHEBI:57476"/>
        <dbReference type="ChEBI" id="CHEBI:57661"/>
        <dbReference type="EC" id="2.3.1.46"/>
    </reaction>
</comment>
<comment type="pathway">
    <text evidence="1">Amino-acid biosynthesis; L-methionine biosynthesis via de novo pathway; O-succinyl-L-homoserine from L-homoserine: step 1/1.</text>
</comment>
<comment type="subunit">
    <text evidence="1">Homodimer.</text>
</comment>
<comment type="subcellular location">
    <subcellularLocation>
        <location evidence="1">Cytoplasm</location>
    </subcellularLocation>
</comment>
<comment type="similarity">
    <text evidence="1">Belongs to the MetA family.</text>
</comment>
<proteinExistence type="inferred from homology"/>
<keyword id="KW-0012">Acyltransferase</keyword>
<keyword id="KW-0028">Amino-acid biosynthesis</keyword>
<keyword id="KW-0963">Cytoplasm</keyword>
<keyword id="KW-0486">Methionine biosynthesis</keyword>
<keyword id="KW-0808">Transferase</keyword>